<organism>
    <name type="scientific">Brucella abortus biovar 1 (strain 9-941)</name>
    <dbReference type="NCBI Taxonomy" id="262698"/>
    <lineage>
        <taxon>Bacteria</taxon>
        <taxon>Pseudomonadati</taxon>
        <taxon>Pseudomonadota</taxon>
        <taxon>Alphaproteobacteria</taxon>
        <taxon>Hyphomicrobiales</taxon>
        <taxon>Brucellaceae</taxon>
        <taxon>Brucella/Ochrobactrum group</taxon>
        <taxon>Brucella</taxon>
    </lineage>
</organism>
<dbReference type="EC" id="2.7.1.33" evidence="1"/>
<dbReference type="EMBL" id="AE017223">
    <property type="protein sequence ID" value="AAX75363.1"/>
    <property type="molecule type" value="Genomic_DNA"/>
</dbReference>
<dbReference type="RefSeq" id="WP_002965153.1">
    <property type="nucleotide sequence ID" value="NC_006932.1"/>
</dbReference>
<dbReference type="SMR" id="Q57AH1"/>
<dbReference type="EnsemblBacteria" id="AAX75363">
    <property type="protein sequence ID" value="AAX75363"/>
    <property type="gene ID" value="BruAb1_2062"/>
</dbReference>
<dbReference type="GeneID" id="93017602"/>
<dbReference type="KEGG" id="bmb:BruAb1_2062"/>
<dbReference type="HOGENOM" id="CLU_053818_1_1_5"/>
<dbReference type="UniPathway" id="UPA00241">
    <property type="reaction ID" value="UER00352"/>
</dbReference>
<dbReference type="Proteomes" id="UP000000540">
    <property type="component" value="Chromosome I"/>
</dbReference>
<dbReference type="GO" id="GO:0005737">
    <property type="term" value="C:cytoplasm"/>
    <property type="evidence" value="ECO:0007669"/>
    <property type="project" value="UniProtKB-SubCell"/>
</dbReference>
<dbReference type="GO" id="GO:0005524">
    <property type="term" value="F:ATP binding"/>
    <property type="evidence" value="ECO:0007669"/>
    <property type="project" value="UniProtKB-UniRule"/>
</dbReference>
<dbReference type="GO" id="GO:0004594">
    <property type="term" value="F:pantothenate kinase activity"/>
    <property type="evidence" value="ECO:0007669"/>
    <property type="project" value="UniProtKB-UniRule"/>
</dbReference>
<dbReference type="GO" id="GO:0015937">
    <property type="term" value="P:coenzyme A biosynthetic process"/>
    <property type="evidence" value="ECO:0007669"/>
    <property type="project" value="UniProtKB-UniRule"/>
</dbReference>
<dbReference type="CDD" id="cd02025">
    <property type="entry name" value="PanK"/>
    <property type="match status" value="1"/>
</dbReference>
<dbReference type="Gene3D" id="3.40.50.300">
    <property type="entry name" value="P-loop containing nucleotide triphosphate hydrolases"/>
    <property type="match status" value="1"/>
</dbReference>
<dbReference type="HAMAP" id="MF_00215">
    <property type="entry name" value="Pantothen_kinase_1"/>
    <property type="match status" value="1"/>
</dbReference>
<dbReference type="InterPro" id="IPR027417">
    <property type="entry name" value="P-loop_NTPase"/>
</dbReference>
<dbReference type="InterPro" id="IPR004566">
    <property type="entry name" value="PanK"/>
</dbReference>
<dbReference type="InterPro" id="IPR006083">
    <property type="entry name" value="PRK/URK"/>
</dbReference>
<dbReference type="NCBIfam" id="TIGR00554">
    <property type="entry name" value="panK_bact"/>
    <property type="match status" value="1"/>
</dbReference>
<dbReference type="PANTHER" id="PTHR10285">
    <property type="entry name" value="URIDINE KINASE"/>
    <property type="match status" value="1"/>
</dbReference>
<dbReference type="Pfam" id="PF00485">
    <property type="entry name" value="PRK"/>
    <property type="match status" value="1"/>
</dbReference>
<dbReference type="PIRSF" id="PIRSF000545">
    <property type="entry name" value="Pantothenate_kin"/>
    <property type="match status" value="1"/>
</dbReference>
<dbReference type="SUPFAM" id="SSF52540">
    <property type="entry name" value="P-loop containing nucleoside triphosphate hydrolases"/>
    <property type="match status" value="1"/>
</dbReference>
<keyword id="KW-0067">ATP-binding</keyword>
<keyword id="KW-0173">Coenzyme A biosynthesis</keyword>
<keyword id="KW-0963">Cytoplasm</keyword>
<keyword id="KW-0418">Kinase</keyword>
<keyword id="KW-0547">Nucleotide-binding</keyword>
<keyword id="KW-0808">Transferase</keyword>
<protein>
    <recommendedName>
        <fullName evidence="1">Pantothenate kinase</fullName>
        <ecNumber evidence="1">2.7.1.33</ecNumber>
    </recommendedName>
    <alternativeName>
        <fullName evidence="1">Pantothenic acid kinase</fullName>
    </alternativeName>
</protein>
<name>COAA_BRUAB</name>
<reference key="1">
    <citation type="journal article" date="2005" name="J. Bacteriol.">
        <title>Completion of the genome sequence of Brucella abortus and comparison to the highly similar genomes of Brucella melitensis and Brucella suis.</title>
        <authorList>
            <person name="Halling S.M."/>
            <person name="Peterson-Burch B.D."/>
            <person name="Bricker B.J."/>
            <person name="Zuerner R.L."/>
            <person name="Qing Z."/>
            <person name="Li L.-L."/>
            <person name="Kapur V."/>
            <person name="Alt D.P."/>
            <person name="Olsen S.C."/>
        </authorList>
    </citation>
    <scope>NUCLEOTIDE SEQUENCE [LARGE SCALE GENOMIC DNA]</scope>
    <source>
        <strain>9-941</strain>
    </source>
</reference>
<proteinExistence type="inferred from homology"/>
<gene>
    <name evidence="1" type="primary">coaA</name>
    <name type="ordered locus">BruAb1_2062</name>
</gene>
<comment type="catalytic activity">
    <reaction evidence="1">
        <text>(R)-pantothenate + ATP = (R)-4'-phosphopantothenate + ADP + H(+)</text>
        <dbReference type="Rhea" id="RHEA:16373"/>
        <dbReference type="ChEBI" id="CHEBI:10986"/>
        <dbReference type="ChEBI" id="CHEBI:15378"/>
        <dbReference type="ChEBI" id="CHEBI:29032"/>
        <dbReference type="ChEBI" id="CHEBI:30616"/>
        <dbReference type="ChEBI" id="CHEBI:456216"/>
        <dbReference type="EC" id="2.7.1.33"/>
    </reaction>
</comment>
<comment type="pathway">
    <text evidence="1">Cofactor biosynthesis; coenzyme A biosynthesis; CoA from (R)-pantothenate: step 1/5.</text>
</comment>
<comment type="subcellular location">
    <subcellularLocation>
        <location evidence="1">Cytoplasm</location>
    </subcellularLocation>
</comment>
<comment type="similarity">
    <text evidence="1">Belongs to the prokaryotic pantothenate kinase family.</text>
</comment>
<evidence type="ECO:0000255" key="1">
    <source>
        <dbReference type="HAMAP-Rule" id="MF_00215"/>
    </source>
</evidence>
<sequence>MWEKVDQLTPSRYSPYRFFSAQEWAAFRADTPLTLTYEEVKRLRSLGDPIDLDEVRRIYLSLSRLLYAHVEASQLLFRQRQQFLNMEESYKTPFIIGVAGSVAVGKSTMARILKELLARWPSSPKVDLVTTDGFLYPNAVLREQNMMERKGFPESYDIGAVLRFLSAIKAGMSRVRAPLYSHLSYDVLPGEYQIVDKPDILIFEGINVLQVRDLPEDGKMVPFVSDFFDFSIYIDADPRLIHKWYIDRFMRLRETAFRDPQSFFHRYSQLSQEAARSIAEGLWQNINMKNLNENILPTRPRADLILRKGSDHLIEEVALRKI</sequence>
<accession>Q57AH1</accession>
<feature type="chain" id="PRO_1000043214" description="Pantothenate kinase">
    <location>
        <begin position="1"/>
        <end position="322"/>
    </location>
</feature>
<feature type="binding site" evidence="1">
    <location>
        <begin position="100"/>
        <end position="107"/>
    </location>
    <ligand>
        <name>ATP</name>
        <dbReference type="ChEBI" id="CHEBI:30616"/>
    </ligand>
</feature>